<reference key="1">
    <citation type="journal article" date="2000" name="Mol. Microbiol.">
        <title>Inactivation of the gene for phospholipid N-methyltransferase in Sinorhizobium meliloti: phosphatidylcholine is required for normal growth.</title>
        <authorList>
            <person name="de Rudder K.E.E."/>
            <person name="Lopez-Lara I.M."/>
            <person name="Geiger O."/>
        </authorList>
    </citation>
    <scope>NUCLEOTIDE SEQUENCE [GENOMIC DNA]</scope>
    <source>
        <strain>1021</strain>
    </source>
</reference>
<reference key="2">
    <citation type="journal article" date="2001" name="Proc. Natl. Acad. Sci. U.S.A.">
        <title>Analysis of the chromosome sequence of the legume symbiont Sinorhizobium meliloti strain 1021.</title>
        <authorList>
            <person name="Capela D."/>
            <person name="Barloy-Hubler F."/>
            <person name="Gouzy J."/>
            <person name="Bothe G."/>
            <person name="Ampe F."/>
            <person name="Batut J."/>
            <person name="Boistard P."/>
            <person name="Becker A."/>
            <person name="Boutry M."/>
            <person name="Cadieu E."/>
            <person name="Dreano S."/>
            <person name="Gloux S."/>
            <person name="Godrie T."/>
            <person name="Goffeau A."/>
            <person name="Kahn D."/>
            <person name="Kiss E."/>
            <person name="Lelaure V."/>
            <person name="Masuy D."/>
            <person name="Pohl T."/>
            <person name="Portetelle D."/>
            <person name="Puehler A."/>
            <person name="Purnelle B."/>
            <person name="Ramsperger U."/>
            <person name="Renard C."/>
            <person name="Thebault P."/>
            <person name="Vandenbol M."/>
            <person name="Weidner S."/>
            <person name="Galibert F."/>
        </authorList>
    </citation>
    <scope>NUCLEOTIDE SEQUENCE [LARGE SCALE GENOMIC DNA]</scope>
    <source>
        <strain>1021</strain>
    </source>
</reference>
<reference key="3">
    <citation type="journal article" date="2001" name="Science">
        <title>The composite genome of the legume symbiont Sinorhizobium meliloti.</title>
        <authorList>
            <person name="Galibert F."/>
            <person name="Finan T.M."/>
            <person name="Long S.R."/>
            <person name="Puehler A."/>
            <person name="Abola P."/>
            <person name="Ampe F."/>
            <person name="Barloy-Hubler F."/>
            <person name="Barnett M.J."/>
            <person name="Becker A."/>
            <person name="Boistard P."/>
            <person name="Bothe G."/>
            <person name="Boutry M."/>
            <person name="Bowser L."/>
            <person name="Buhrmester J."/>
            <person name="Cadieu E."/>
            <person name="Capela D."/>
            <person name="Chain P."/>
            <person name="Cowie A."/>
            <person name="Davis R.W."/>
            <person name="Dreano S."/>
            <person name="Federspiel N.A."/>
            <person name="Fisher R.F."/>
            <person name="Gloux S."/>
            <person name="Godrie T."/>
            <person name="Goffeau A."/>
            <person name="Golding B."/>
            <person name="Gouzy J."/>
            <person name="Gurjal M."/>
            <person name="Hernandez-Lucas I."/>
            <person name="Hong A."/>
            <person name="Huizar L."/>
            <person name="Hyman R.W."/>
            <person name="Jones T."/>
            <person name="Kahn D."/>
            <person name="Kahn M.L."/>
            <person name="Kalman S."/>
            <person name="Keating D.H."/>
            <person name="Kiss E."/>
            <person name="Komp C."/>
            <person name="Lelaure V."/>
            <person name="Masuy D."/>
            <person name="Palm C."/>
            <person name="Peck M.C."/>
            <person name="Pohl T.M."/>
            <person name="Portetelle D."/>
            <person name="Purnelle B."/>
            <person name="Ramsperger U."/>
            <person name="Surzycki R."/>
            <person name="Thebault P."/>
            <person name="Vandenbol M."/>
            <person name="Vorhoelter F.J."/>
            <person name="Weidner S."/>
            <person name="Wells D.H."/>
            <person name="Wong K."/>
            <person name="Yeh K.-C."/>
            <person name="Batut J."/>
        </authorList>
    </citation>
    <scope>NUCLEOTIDE SEQUENCE [LARGE SCALE GENOMIC DNA]</scope>
    <source>
        <strain>1021</strain>
    </source>
</reference>
<name>PYRF_RHIME</name>
<keyword id="KW-0210">Decarboxylase</keyword>
<keyword id="KW-0456">Lyase</keyword>
<keyword id="KW-0665">Pyrimidine biosynthesis</keyword>
<keyword id="KW-1185">Reference proteome</keyword>
<sequence>MSTSARDRLIVGLDLPTVTEAEKIVSTLGEEVLFYKIGYQLAFAGGLDFARDLAASGKQVFLDMKLLDIDNTVAKGVENIVKMGVSMLTLHAYPKAMKSAVEAARGSNLCLLGVTVLTSMDEQDVIDAGYEYDPHSLVLRRAEQARAAGMGGIVCSAEEAAAVRKIIGGDMALVTPGIRPAGAEKGDQKRVMTPADALRAGSSHLVVGRPIVAAPDPLAASRAILAEMESALSR</sequence>
<organism>
    <name type="scientific">Rhizobium meliloti (strain 1021)</name>
    <name type="common">Ensifer meliloti</name>
    <name type="synonym">Sinorhizobium meliloti</name>
    <dbReference type="NCBI Taxonomy" id="266834"/>
    <lineage>
        <taxon>Bacteria</taxon>
        <taxon>Pseudomonadati</taxon>
        <taxon>Pseudomonadota</taxon>
        <taxon>Alphaproteobacteria</taxon>
        <taxon>Hyphomicrobiales</taxon>
        <taxon>Rhizobiaceae</taxon>
        <taxon>Sinorhizobium/Ensifer group</taxon>
        <taxon>Sinorhizobium</taxon>
    </lineage>
</organism>
<protein>
    <recommendedName>
        <fullName evidence="1">Orotidine 5'-phosphate decarboxylase</fullName>
        <ecNumber evidence="1">4.1.1.23</ecNumber>
    </recommendedName>
    <alternativeName>
        <fullName evidence="1">OMP decarboxylase</fullName>
        <shortName evidence="1">OMPDCase</shortName>
        <shortName evidence="1">OMPdecase</shortName>
    </alternativeName>
</protein>
<proteinExistence type="inferred from homology"/>
<feature type="chain" id="PRO_0000134569" description="Orotidine 5'-phosphate decarboxylase">
    <location>
        <begin position="1"/>
        <end position="234"/>
    </location>
</feature>
<feature type="active site" description="Proton donor" evidence="1">
    <location>
        <position position="65"/>
    </location>
</feature>
<feature type="binding site" evidence="1">
    <location>
        <position position="14"/>
    </location>
    <ligand>
        <name>substrate</name>
    </ligand>
</feature>
<feature type="binding site" evidence="1">
    <location>
        <position position="36"/>
    </location>
    <ligand>
        <name>substrate</name>
    </ligand>
</feature>
<feature type="binding site" evidence="1">
    <location>
        <begin position="63"/>
        <end position="72"/>
    </location>
    <ligand>
        <name>substrate</name>
    </ligand>
</feature>
<feature type="binding site" evidence="1">
    <location>
        <position position="118"/>
    </location>
    <ligand>
        <name>substrate</name>
    </ligand>
</feature>
<feature type="binding site" evidence="1">
    <location>
        <position position="179"/>
    </location>
    <ligand>
        <name>substrate</name>
    </ligand>
</feature>
<feature type="binding site" evidence="1">
    <location>
        <position position="188"/>
    </location>
    <ligand>
        <name>substrate</name>
    </ligand>
</feature>
<feature type="binding site" evidence="1">
    <location>
        <position position="208"/>
    </location>
    <ligand>
        <name>substrate</name>
    </ligand>
</feature>
<feature type="binding site" evidence="1">
    <location>
        <position position="209"/>
    </location>
    <ligand>
        <name>substrate</name>
    </ligand>
</feature>
<feature type="sequence conflict" description="In Ref. 1; AAG10239." evidence="2" ref="1">
    <original>AL</original>
    <variation>V</variation>
    <location>
        <begin position="197"/>
        <end position="198"/>
    </location>
</feature>
<dbReference type="EC" id="4.1.1.23" evidence="1"/>
<dbReference type="EMBL" id="AF201699">
    <property type="protein sequence ID" value="AAG10239.1"/>
    <property type="molecule type" value="Genomic_DNA"/>
</dbReference>
<dbReference type="EMBL" id="AL591688">
    <property type="protein sequence ID" value="CAC41769.1"/>
    <property type="molecule type" value="Genomic_DNA"/>
</dbReference>
<dbReference type="RefSeq" id="NP_384438.1">
    <property type="nucleotide sequence ID" value="NC_003047.1"/>
</dbReference>
<dbReference type="RefSeq" id="WP_010968510.1">
    <property type="nucleotide sequence ID" value="NC_003047.1"/>
</dbReference>
<dbReference type="SMR" id="Q92SN8"/>
<dbReference type="EnsemblBacteria" id="CAC41769">
    <property type="protein sequence ID" value="CAC41769"/>
    <property type="gene ID" value="SMc00412"/>
</dbReference>
<dbReference type="GeneID" id="89574659"/>
<dbReference type="KEGG" id="sme:SMc00412"/>
<dbReference type="PATRIC" id="fig|266834.11.peg.1703"/>
<dbReference type="eggNOG" id="COG0284">
    <property type="taxonomic scope" value="Bacteria"/>
</dbReference>
<dbReference type="HOGENOM" id="CLU_067069_1_0_5"/>
<dbReference type="OrthoDB" id="9806203at2"/>
<dbReference type="UniPathway" id="UPA00070">
    <property type="reaction ID" value="UER00120"/>
</dbReference>
<dbReference type="Proteomes" id="UP000001976">
    <property type="component" value="Chromosome"/>
</dbReference>
<dbReference type="GO" id="GO:0005829">
    <property type="term" value="C:cytosol"/>
    <property type="evidence" value="ECO:0007669"/>
    <property type="project" value="TreeGrafter"/>
</dbReference>
<dbReference type="GO" id="GO:0004590">
    <property type="term" value="F:orotidine-5'-phosphate decarboxylase activity"/>
    <property type="evidence" value="ECO:0007669"/>
    <property type="project" value="UniProtKB-UniRule"/>
</dbReference>
<dbReference type="GO" id="GO:0006207">
    <property type="term" value="P:'de novo' pyrimidine nucleobase biosynthetic process"/>
    <property type="evidence" value="ECO:0007669"/>
    <property type="project" value="InterPro"/>
</dbReference>
<dbReference type="GO" id="GO:0044205">
    <property type="term" value="P:'de novo' UMP biosynthetic process"/>
    <property type="evidence" value="ECO:0007669"/>
    <property type="project" value="UniProtKB-UniRule"/>
</dbReference>
<dbReference type="CDD" id="cd04725">
    <property type="entry name" value="OMP_decarboxylase_like"/>
    <property type="match status" value="1"/>
</dbReference>
<dbReference type="Gene3D" id="3.20.20.70">
    <property type="entry name" value="Aldolase class I"/>
    <property type="match status" value="1"/>
</dbReference>
<dbReference type="HAMAP" id="MF_01200_B">
    <property type="entry name" value="OMPdecase_type1_B"/>
    <property type="match status" value="1"/>
</dbReference>
<dbReference type="InterPro" id="IPR013785">
    <property type="entry name" value="Aldolase_TIM"/>
</dbReference>
<dbReference type="InterPro" id="IPR014732">
    <property type="entry name" value="OMPdecase"/>
</dbReference>
<dbReference type="InterPro" id="IPR018089">
    <property type="entry name" value="OMPdecase_AS"/>
</dbReference>
<dbReference type="InterPro" id="IPR047596">
    <property type="entry name" value="OMPdecase_bac"/>
</dbReference>
<dbReference type="InterPro" id="IPR001754">
    <property type="entry name" value="OMPdeCOase_dom"/>
</dbReference>
<dbReference type="InterPro" id="IPR011060">
    <property type="entry name" value="RibuloseP-bd_barrel"/>
</dbReference>
<dbReference type="NCBIfam" id="NF001273">
    <property type="entry name" value="PRK00230.1"/>
    <property type="match status" value="1"/>
</dbReference>
<dbReference type="NCBIfam" id="TIGR01740">
    <property type="entry name" value="pyrF"/>
    <property type="match status" value="1"/>
</dbReference>
<dbReference type="PANTHER" id="PTHR32119">
    <property type="entry name" value="OROTIDINE 5'-PHOSPHATE DECARBOXYLASE"/>
    <property type="match status" value="1"/>
</dbReference>
<dbReference type="PANTHER" id="PTHR32119:SF2">
    <property type="entry name" value="OROTIDINE 5'-PHOSPHATE DECARBOXYLASE"/>
    <property type="match status" value="1"/>
</dbReference>
<dbReference type="Pfam" id="PF00215">
    <property type="entry name" value="OMPdecase"/>
    <property type="match status" value="1"/>
</dbReference>
<dbReference type="SMART" id="SM00934">
    <property type="entry name" value="OMPdecase"/>
    <property type="match status" value="1"/>
</dbReference>
<dbReference type="SUPFAM" id="SSF51366">
    <property type="entry name" value="Ribulose-phoshate binding barrel"/>
    <property type="match status" value="1"/>
</dbReference>
<dbReference type="PROSITE" id="PS00156">
    <property type="entry name" value="OMPDECASE"/>
    <property type="match status" value="1"/>
</dbReference>
<accession>Q92SN8</accession>
<accession>Q9F953</accession>
<evidence type="ECO:0000255" key="1">
    <source>
        <dbReference type="HAMAP-Rule" id="MF_01200"/>
    </source>
</evidence>
<evidence type="ECO:0000305" key="2"/>
<gene>
    <name evidence="1" type="primary">pyrF</name>
    <name type="ordered locus">R00332</name>
    <name type="ORF">SMc00412</name>
</gene>
<comment type="function">
    <text evidence="1">Catalyzes the decarboxylation of orotidine 5'-monophosphate (OMP) to uridine 5'-monophosphate (UMP).</text>
</comment>
<comment type="catalytic activity">
    <reaction evidence="1">
        <text>orotidine 5'-phosphate + H(+) = UMP + CO2</text>
        <dbReference type="Rhea" id="RHEA:11596"/>
        <dbReference type="ChEBI" id="CHEBI:15378"/>
        <dbReference type="ChEBI" id="CHEBI:16526"/>
        <dbReference type="ChEBI" id="CHEBI:57538"/>
        <dbReference type="ChEBI" id="CHEBI:57865"/>
        <dbReference type="EC" id="4.1.1.23"/>
    </reaction>
</comment>
<comment type="pathway">
    <text evidence="1">Pyrimidine metabolism; UMP biosynthesis via de novo pathway; UMP from orotate: step 2/2.</text>
</comment>
<comment type="subunit">
    <text evidence="1">Homodimer.</text>
</comment>
<comment type="similarity">
    <text evidence="1">Belongs to the OMP decarboxylase family. Type 1 subfamily.</text>
</comment>